<feature type="chain" id="PRO_0000388598" description="Golgi to ER traffic protein 1">
    <location>
        <begin position="1"/>
        <end position="204"/>
    </location>
</feature>
<feature type="topological domain" description="Lumenal" evidence="1">
    <location>
        <begin position="1"/>
        <end position="11"/>
    </location>
</feature>
<feature type="transmembrane region" description="Helical" evidence="1">
    <location>
        <begin position="12"/>
        <end position="31"/>
    </location>
</feature>
<feature type="topological domain" description="Cytoplasmic" evidence="1">
    <location>
        <begin position="32"/>
        <end position="116"/>
    </location>
</feature>
<feature type="transmembrane region" description="Helical" evidence="1">
    <location>
        <begin position="117"/>
        <end position="137"/>
    </location>
</feature>
<feature type="topological domain" description="Lumenal" evidence="1">
    <location>
        <begin position="138"/>
        <end position="161"/>
    </location>
</feature>
<feature type="transmembrane region" description="Helical" evidence="1">
    <location>
        <begin position="162"/>
        <end position="178"/>
    </location>
</feature>
<feature type="topological domain" description="Cytoplasmic" evidence="1">
    <location>
        <begin position="179"/>
        <end position="204"/>
    </location>
</feature>
<feature type="coiled-coil region" evidence="1">
    <location>
        <begin position="78"/>
        <end position="113"/>
    </location>
</feature>
<proteinExistence type="inferred from homology"/>
<protein>
    <recommendedName>
        <fullName evidence="1">Golgi to ER traffic protein 1</fullName>
    </recommendedName>
    <alternativeName>
        <fullName evidence="1">Guided entry of tail-anchored proteins 1</fullName>
    </alternativeName>
</protein>
<name>GET1_LODEL</name>
<dbReference type="EMBL" id="CH981524">
    <property type="protein sequence ID" value="EDK43017.1"/>
    <property type="molecule type" value="Genomic_DNA"/>
</dbReference>
<dbReference type="RefSeq" id="XP_001528675.1">
    <property type="nucleotide sequence ID" value="XM_001528625.1"/>
</dbReference>
<dbReference type="SMR" id="A5DV09"/>
<dbReference type="FunCoup" id="A5DV09">
    <property type="interactions" value="31"/>
</dbReference>
<dbReference type="STRING" id="379508.A5DV09"/>
<dbReference type="GeneID" id="5235304"/>
<dbReference type="KEGG" id="lel:PVL30_001164"/>
<dbReference type="VEuPathDB" id="FungiDB:LELG_01195"/>
<dbReference type="eggNOG" id="KOG4253">
    <property type="taxonomic scope" value="Eukaryota"/>
</dbReference>
<dbReference type="HOGENOM" id="CLU_089418_2_0_1"/>
<dbReference type="InParanoid" id="A5DV09"/>
<dbReference type="OMA" id="AEWIISF"/>
<dbReference type="OrthoDB" id="69461at2759"/>
<dbReference type="Proteomes" id="UP000001996">
    <property type="component" value="Unassembled WGS sequence"/>
</dbReference>
<dbReference type="GO" id="GO:0005789">
    <property type="term" value="C:endoplasmic reticulum membrane"/>
    <property type="evidence" value="ECO:0007669"/>
    <property type="project" value="UniProtKB-SubCell"/>
</dbReference>
<dbReference type="GO" id="GO:0043529">
    <property type="term" value="C:GET complex"/>
    <property type="evidence" value="ECO:0007669"/>
    <property type="project" value="UniProtKB-UniRule"/>
</dbReference>
<dbReference type="GO" id="GO:0000139">
    <property type="term" value="C:Golgi membrane"/>
    <property type="evidence" value="ECO:0007669"/>
    <property type="project" value="UniProtKB-SubCell"/>
</dbReference>
<dbReference type="GO" id="GO:0043495">
    <property type="term" value="F:protein-membrane adaptor activity"/>
    <property type="evidence" value="ECO:0007669"/>
    <property type="project" value="TreeGrafter"/>
</dbReference>
<dbReference type="GO" id="GO:0071816">
    <property type="term" value="P:tail-anchored membrane protein insertion into ER membrane"/>
    <property type="evidence" value="ECO:0007669"/>
    <property type="project" value="InterPro"/>
</dbReference>
<dbReference type="GO" id="GO:0016192">
    <property type="term" value="P:vesicle-mediated transport"/>
    <property type="evidence" value="ECO:0007669"/>
    <property type="project" value="UniProtKB-KW"/>
</dbReference>
<dbReference type="Gene3D" id="1.10.287.660">
    <property type="entry name" value="Helix hairpin bin"/>
    <property type="match status" value="1"/>
</dbReference>
<dbReference type="HAMAP" id="MF_03113">
    <property type="entry name" value="Get1"/>
    <property type="match status" value="1"/>
</dbReference>
<dbReference type="InterPro" id="IPR028945">
    <property type="entry name" value="Get1"/>
</dbReference>
<dbReference type="InterPro" id="IPR027538">
    <property type="entry name" value="Get1_fungi"/>
</dbReference>
<dbReference type="InterPro" id="IPR029012">
    <property type="entry name" value="Helix_hairpin_bin_sf"/>
</dbReference>
<dbReference type="PANTHER" id="PTHR42650:SF1">
    <property type="entry name" value="GUIDED ENTRY OF TAIL-ANCHORED PROTEINS FACTOR 1"/>
    <property type="match status" value="1"/>
</dbReference>
<dbReference type="PANTHER" id="PTHR42650">
    <property type="entry name" value="TAIL-ANCHORED PROTEIN INSERTION RECEPTOR WRB"/>
    <property type="match status" value="1"/>
</dbReference>
<dbReference type="Pfam" id="PF04420">
    <property type="entry name" value="CHD5"/>
    <property type="match status" value="1"/>
</dbReference>
<reference key="1">
    <citation type="journal article" date="2009" name="Nature">
        <title>Evolution of pathogenicity and sexual reproduction in eight Candida genomes.</title>
        <authorList>
            <person name="Butler G."/>
            <person name="Rasmussen M.D."/>
            <person name="Lin M.F."/>
            <person name="Santos M.A.S."/>
            <person name="Sakthikumar S."/>
            <person name="Munro C.A."/>
            <person name="Rheinbay E."/>
            <person name="Grabherr M."/>
            <person name="Forche A."/>
            <person name="Reedy J.L."/>
            <person name="Agrafioti I."/>
            <person name="Arnaud M.B."/>
            <person name="Bates S."/>
            <person name="Brown A.J.P."/>
            <person name="Brunke S."/>
            <person name="Costanzo M.C."/>
            <person name="Fitzpatrick D.A."/>
            <person name="de Groot P.W.J."/>
            <person name="Harris D."/>
            <person name="Hoyer L.L."/>
            <person name="Hube B."/>
            <person name="Klis F.M."/>
            <person name="Kodira C."/>
            <person name="Lennard N."/>
            <person name="Logue M.E."/>
            <person name="Martin R."/>
            <person name="Neiman A.M."/>
            <person name="Nikolaou E."/>
            <person name="Quail M.A."/>
            <person name="Quinn J."/>
            <person name="Santos M.C."/>
            <person name="Schmitzberger F.F."/>
            <person name="Sherlock G."/>
            <person name="Shah P."/>
            <person name="Silverstein K.A.T."/>
            <person name="Skrzypek M.S."/>
            <person name="Soll D."/>
            <person name="Staggs R."/>
            <person name="Stansfield I."/>
            <person name="Stumpf M.P.H."/>
            <person name="Sudbery P.E."/>
            <person name="Srikantha T."/>
            <person name="Zeng Q."/>
            <person name="Berman J."/>
            <person name="Berriman M."/>
            <person name="Heitman J."/>
            <person name="Gow N.A.R."/>
            <person name="Lorenz M.C."/>
            <person name="Birren B.W."/>
            <person name="Kellis M."/>
            <person name="Cuomo C.A."/>
        </authorList>
    </citation>
    <scope>NUCLEOTIDE SEQUENCE [LARGE SCALE GENOMIC DNA]</scope>
    <source>
        <strain>ATCC 11503 / BCRC 21390 / CBS 2605 / JCM 1781 / NBRC 1676 / NRRL YB-4239</strain>
    </source>
</reference>
<gene>
    <name evidence="1" type="primary">GET1</name>
    <name type="ORF">LELG_01195</name>
</gene>
<accession>A5DV09</accession>
<evidence type="ECO:0000255" key="1">
    <source>
        <dbReference type="HAMAP-Rule" id="MF_03113"/>
    </source>
</evidence>
<keyword id="KW-0175">Coiled coil</keyword>
<keyword id="KW-0256">Endoplasmic reticulum</keyword>
<keyword id="KW-0931">ER-Golgi transport</keyword>
<keyword id="KW-0333">Golgi apparatus</keyword>
<keyword id="KW-0472">Membrane</keyword>
<keyword id="KW-1185">Reference proteome</keyword>
<keyword id="KW-0812">Transmembrane</keyword>
<keyword id="KW-1133">Transmembrane helix</keyword>
<keyword id="KW-0813">Transport</keyword>
<organism>
    <name type="scientific">Lodderomyces elongisporus (strain ATCC 11503 / CBS 2605 / JCM 1781 / NBRC 1676 / NRRL YB-4239)</name>
    <name type="common">Yeast</name>
    <name type="synonym">Saccharomyces elongisporus</name>
    <dbReference type="NCBI Taxonomy" id="379508"/>
    <lineage>
        <taxon>Eukaryota</taxon>
        <taxon>Fungi</taxon>
        <taxon>Dikarya</taxon>
        <taxon>Ascomycota</taxon>
        <taxon>Saccharomycotina</taxon>
        <taxon>Pichiomycetes</taxon>
        <taxon>Debaryomycetaceae</taxon>
        <taxon>Candida/Lodderomyces clade</taxon>
        <taxon>Lodderomyces</taxon>
    </lineage>
</organism>
<comment type="function">
    <text evidence="1">Required for the post-translational delivery of tail-anchored (TA) proteins to the endoplasmic reticulum. Together with GET2, acts as a membrane receptor for soluble GET3, which recognizes and selectively binds the transmembrane domain of TA proteins in the cytosol. The GET complex cooperates with the HDEL receptor ERD2 to mediate the ATP-dependent retrieval of resident ER proteins that contain a C-terminal H-D-E-L retention signal from the Golgi to the ER.</text>
</comment>
<comment type="subunit">
    <text evidence="1">Component of the Golgi to ER traffic (GET) complex, which is composed of GET1, GET2 and GET3. Within the complex, GET1 and GET2 form a heterotetramer which is stabilized by phosphatidylinositol binding and which binds to the GET3 homodimer.</text>
</comment>
<comment type="subcellular location">
    <subcellularLocation>
        <location evidence="1">Endoplasmic reticulum membrane</location>
        <topology evidence="1">Multi-pass membrane protein</topology>
    </subcellularLocation>
    <subcellularLocation>
        <location evidence="1">Golgi apparatus membrane</location>
        <topology evidence="1">Multi-pass membrane protein</topology>
    </subcellularLocation>
</comment>
<comment type="similarity">
    <text evidence="1">Belongs to the WRB/GET1 family.</text>
</comment>
<sequence length="204" mass="23870">MLTLDIDPYTILVTSFLILAIQKLVTVIGKQKIQLYIWQIYTKYLSHSQSIKQFNLKQKEIKDLTKQQKLISAQDEYAKWTKINRALDKLKLEVQELNETIAGEKTRIDSITKLAITLILTLPIWFLRIFCRKTALLYIRKGILPAYLEWWLALPFFKSGTIGLTCWMFVVNSVLSNLIFLISFPFTQKVERPIKPKNEQKTES</sequence>